<dbReference type="EC" id="4.2.3.124"/>
<dbReference type="EMBL" id="AJ628955">
    <property type="protein sequence ID" value="CAF32374.1"/>
    <property type="molecule type" value="Genomic_DNA"/>
</dbReference>
<dbReference type="SMR" id="Q2MFP1"/>
<dbReference type="UniPathway" id="UPA00907">
    <property type="reaction ID" value="UER00921"/>
</dbReference>
<dbReference type="UniPathway" id="UPA00970"/>
<dbReference type="GO" id="GO:0003856">
    <property type="term" value="F:3-dehydroquinate synthase activity"/>
    <property type="evidence" value="ECO:0007669"/>
    <property type="project" value="TreeGrafter"/>
</dbReference>
<dbReference type="GO" id="GO:0046872">
    <property type="term" value="F:metal ion binding"/>
    <property type="evidence" value="ECO:0007669"/>
    <property type="project" value="UniProtKB-KW"/>
</dbReference>
<dbReference type="GO" id="GO:0017000">
    <property type="term" value="P:antibiotic biosynthetic process"/>
    <property type="evidence" value="ECO:0007669"/>
    <property type="project" value="UniProtKB-KW"/>
</dbReference>
<dbReference type="GO" id="GO:0009073">
    <property type="term" value="P:aromatic amino acid family biosynthetic process"/>
    <property type="evidence" value="ECO:0007669"/>
    <property type="project" value="InterPro"/>
</dbReference>
<dbReference type="CDD" id="cd08197">
    <property type="entry name" value="DOIS"/>
    <property type="match status" value="1"/>
</dbReference>
<dbReference type="Gene3D" id="3.40.50.1970">
    <property type="match status" value="1"/>
</dbReference>
<dbReference type="Gene3D" id="1.20.1090.10">
    <property type="entry name" value="Dehydroquinate synthase-like - alpha domain"/>
    <property type="match status" value="1"/>
</dbReference>
<dbReference type="InterPro" id="IPR050071">
    <property type="entry name" value="Dehydroquinate_synthase"/>
</dbReference>
<dbReference type="InterPro" id="IPR030963">
    <property type="entry name" value="DHQ_synth_fam"/>
</dbReference>
<dbReference type="InterPro" id="IPR030960">
    <property type="entry name" value="DHQS/DOIS_N"/>
</dbReference>
<dbReference type="InterPro" id="IPR056179">
    <property type="entry name" value="DHQS_C"/>
</dbReference>
<dbReference type="PANTHER" id="PTHR43622">
    <property type="entry name" value="3-DEHYDROQUINATE SYNTHASE"/>
    <property type="match status" value="1"/>
</dbReference>
<dbReference type="PANTHER" id="PTHR43622:SF1">
    <property type="entry name" value="3-DEHYDROQUINATE SYNTHASE"/>
    <property type="match status" value="1"/>
</dbReference>
<dbReference type="Pfam" id="PF01761">
    <property type="entry name" value="DHQ_synthase"/>
    <property type="match status" value="1"/>
</dbReference>
<dbReference type="Pfam" id="PF24621">
    <property type="entry name" value="DHQS_C"/>
    <property type="match status" value="1"/>
</dbReference>
<dbReference type="PIRSF" id="PIRSF001455">
    <property type="entry name" value="DHQ_synth"/>
    <property type="match status" value="1"/>
</dbReference>
<dbReference type="SUPFAM" id="SSF56796">
    <property type="entry name" value="Dehydroquinate synthase-like"/>
    <property type="match status" value="1"/>
</dbReference>
<accession>Q2MFP1</accession>
<organism>
    <name type="scientific">Streptomyces paromomycinus</name>
    <name type="common">Streptomyces rimosus subsp. paromomycinus</name>
    <dbReference type="NCBI Taxonomy" id="92743"/>
    <lineage>
        <taxon>Bacteria</taxon>
        <taxon>Bacillati</taxon>
        <taxon>Actinomycetota</taxon>
        <taxon>Actinomycetes</taxon>
        <taxon>Kitasatosporales</taxon>
        <taxon>Streptomycetaceae</taxon>
        <taxon>Streptomyces</taxon>
    </lineage>
</organism>
<protein>
    <recommendedName>
        <fullName>2-deoxy-scyllo-inosose synthase</fullName>
        <shortName>DOI synthase</shortName>
        <shortName>DOIS</shortName>
        <ecNumber>4.2.3.124</ecNumber>
    </recommendedName>
</protein>
<sequence length="386" mass="40388">MHVTAITMEDTSFPYRLGTECAEEIVARLGERAASRYLVVCDTTVAALYGRDLVARLEKDAGPAVLLTHPAGEVHKRIGTVGDLAEQALAAGADRRSVVVALGGGITGNIAGLLASLLFRGITLVHVPTTVVAMLDSVLSLKQAVNASFGKNLVGTFYQPAEVLADTAMLRTLPARELRSGMGEVVKNALAIRPSMIERLAAELRPDARYEDAAMRWIIEESVAAKAQVTGADKHERRDGLVLEYGHTTGHAIEHAARGEVAHGAGVAIGMIVAAEVSRLLGHASGDLVGLHRELVAKAGLEGSVPALVDPADVKHWLTYDNKRGYMPCPPAATPMVLLSAPGEVLRSGPLPLVPVPLELLGRAVDALAAPAGQSAGAERLSPAPA</sequence>
<proteinExistence type="inferred from homology"/>
<comment type="function">
    <text evidence="1">Catalyzes the intramolecular carbocycle formation from D-glucose-6-phosphate to 2-deoxy-scyllo-inosose (DOI).</text>
</comment>
<comment type="catalytic activity">
    <reaction>
        <text>D-glucose 6-phosphate = 2-deoxy-L-scyllo-inosose + phosphate</text>
        <dbReference type="Rhea" id="RHEA:33071"/>
        <dbReference type="ChEBI" id="CHEBI:43474"/>
        <dbReference type="ChEBI" id="CHEBI:61548"/>
        <dbReference type="ChEBI" id="CHEBI:64796"/>
        <dbReference type="EC" id="4.2.3.124"/>
    </reaction>
</comment>
<comment type="cofactor">
    <cofactor evidence="2">
        <name>NAD(+)</name>
        <dbReference type="ChEBI" id="CHEBI:57540"/>
    </cofactor>
</comment>
<comment type="cofactor">
    <cofactor evidence="2">
        <name>Co(2+)</name>
        <dbReference type="ChEBI" id="CHEBI:48828"/>
    </cofactor>
    <text evidence="2">Binds 1 Co(2+) ion per subunit.</text>
</comment>
<comment type="pathway">
    <text>Metabolic intermediate biosynthesis; 2-deoxystreptamine biosynthesis; 2-deoxystreptamine from D-glucose 6-phosphate: step 1/4.</text>
</comment>
<comment type="pathway">
    <text>Antibiotic biosynthesis; paromomycin biosynthesis.</text>
</comment>
<comment type="similarity">
    <text evidence="3">Belongs to the sugar phosphate cyclases superfamily. DOI synthase family.</text>
</comment>
<reference key="1">
    <citation type="submission" date="2004-02" db="EMBL/GenBank/DDBJ databases">
        <title>Analysis and comparison of the biosynthetic gene clusters for the 2-deoxystreptamine-containing aminoglycoside antibiotics ribostamycin, neomycin, lividomycin, paromomycin and butirosin.</title>
        <authorList>
            <person name="Aboshanab K.M.A."/>
            <person name="Schmidt-Beissner H."/>
            <person name="Wehmeier U.F."/>
            <person name="Welzel K."/>
            <person name="Vente A."/>
            <person name="Piepersberg W."/>
        </authorList>
    </citation>
    <scope>NUCLEOTIDE SEQUENCE [GENOMIC DNA]</scope>
    <source>
        <strain>ATCC 14827 / DSM 41429 / JCM 4541 / KCC S-0541 / NBRC 15454 / NRRL 2455 / VKM Ac-605</strain>
    </source>
</reference>
<gene>
    <name type="primary">parC</name>
</gene>
<name>DOIS_STREY</name>
<keyword id="KW-0045">Antibiotic biosynthesis</keyword>
<keyword id="KW-0170">Cobalt</keyword>
<keyword id="KW-0456">Lyase</keyword>
<keyword id="KW-0479">Metal-binding</keyword>
<keyword id="KW-0520">NAD</keyword>
<evidence type="ECO:0000250" key="1"/>
<evidence type="ECO:0000250" key="2">
    <source>
        <dbReference type="UniProtKB" id="Q9S5E2"/>
    </source>
</evidence>
<evidence type="ECO:0000305" key="3"/>
<feature type="chain" id="PRO_0000234040" description="2-deoxy-scyllo-inosose synthase">
    <location>
        <begin position="1"/>
        <end position="386"/>
    </location>
</feature>
<feature type="active site" evidence="2">
    <location>
        <position position="142"/>
    </location>
</feature>
<feature type="active site" evidence="2">
    <location>
        <position position="244"/>
    </location>
</feature>
<feature type="binding site" evidence="2">
    <location>
        <position position="42"/>
    </location>
    <ligand>
        <name>NAD(+)</name>
        <dbReference type="ChEBI" id="CHEBI:57540"/>
    </ligand>
</feature>
<feature type="binding site" evidence="2">
    <location>
        <begin position="73"/>
        <end position="76"/>
    </location>
    <ligand>
        <name>NAD(+)</name>
        <dbReference type="ChEBI" id="CHEBI:57540"/>
    </ligand>
</feature>
<feature type="binding site" evidence="2">
    <location>
        <begin position="105"/>
        <end position="109"/>
    </location>
    <ligand>
        <name>NAD(+)</name>
        <dbReference type="ChEBI" id="CHEBI:57540"/>
    </ligand>
</feature>
<feature type="binding site" evidence="2">
    <location>
        <begin position="129"/>
        <end position="130"/>
    </location>
    <ligand>
        <name>NAD(+)</name>
        <dbReference type="ChEBI" id="CHEBI:57540"/>
    </ligand>
</feature>
<feature type="binding site" evidence="2">
    <location>
        <begin position="140"/>
        <end position="142"/>
    </location>
    <ligand>
        <name>NAD(+)</name>
        <dbReference type="ChEBI" id="CHEBI:57540"/>
    </ligand>
</feature>
<feature type="binding site" evidence="2">
    <location>
        <begin position="151"/>
        <end position="152"/>
    </location>
    <ligand>
        <name>NAD(+)</name>
        <dbReference type="ChEBI" id="CHEBI:57540"/>
    </ligand>
</feature>
<feature type="binding site" evidence="2">
    <location>
        <position position="184"/>
    </location>
    <ligand>
        <name>Co(2+)</name>
        <dbReference type="ChEBI" id="CHEBI:48828"/>
    </ligand>
</feature>
<feature type="binding site" evidence="2">
    <location>
        <position position="247"/>
    </location>
    <ligand>
        <name>Co(2+)</name>
        <dbReference type="ChEBI" id="CHEBI:48828"/>
    </ligand>
</feature>
<feature type="binding site" evidence="2">
    <location>
        <position position="263"/>
    </location>
    <ligand>
        <name>Co(2+)</name>
        <dbReference type="ChEBI" id="CHEBI:48828"/>
    </ligand>
</feature>